<sequence>MLRREARLRREYLYRKAREEAQRSAQERKERLRRALEENRLIPTELRREALALQGSLEFDDAGGEGVTSHVDDEYRWAGVEDPKVMITTSRDPSSRLKMFAKELKLVFPGAQRMNRGRHEVGALVRACKANGVTDLLVVHEHRGTPVGLIVSHLPFGPTAYFTLCNVVMRHDIPDLGTMSEAKPHLITHGFSSRLGKRVSDILRYLFPVPKDDSHRVITFANQDDYISFRHHVYKKTDHRNVELTEVGPRFELKLYMIRLGTLEQEATADVEWRWHPYTNTARKRVFLSTE</sequence>
<dbReference type="EMBL" id="AY364245">
    <property type="protein sequence ID" value="AAQ76804.1"/>
    <property type="molecule type" value="mRNA"/>
</dbReference>
<dbReference type="EMBL" id="AK289878">
    <property type="protein sequence ID" value="BAF82567.1"/>
    <property type="molecule type" value="mRNA"/>
</dbReference>
<dbReference type="EMBL" id="AK292345">
    <property type="protein sequence ID" value="BAF85034.1"/>
    <property type="molecule type" value="mRNA"/>
</dbReference>
<dbReference type="EMBL" id="AK312808">
    <property type="protein sequence ID" value="BAG35666.1"/>
    <property type="molecule type" value="mRNA"/>
</dbReference>
<dbReference type="EMBL" id="AC132479">
    <property type="protein sequence ID" value="AAY24076.1"/>
    <property type="molecule type" value="Genomic_DNA"/>
</dbReference>
<dbReference type="EMBL" id="BC010042">
    <property type="protein sequence ID" value="AAH10042.1"/>
    <property type="molecule type" value="mRNA"/>
</dbReference>
<dbReference type="CCDS" id="CCDS2160.1"/>
<dbReference type="RefSeq" id="NP_001307233.1">
    <property type="nucleotide sequence ID" value="NM_001320304.1"/>
</dbReference>
<dbReference type="RefSeq" id="NP_001307234.1">
    <property type="nucleotide sequence ID" value="NM_001320305.1"/>
</dbReference>
<dbReference type="RefSeq" id="NP_001307235.1">
    <property type="nucleotide sequence ID" value="NM_001320306.1"/>
</dbReference>
<dbReference type="RefSeq" id="NP_001307236.1">
    <property type="nucleotide sequence ID" value="NM_001320307.1"/>
</dbReference>
<dbReference type="RefSeq" id="NP_001307238.1">
    <property type="nucleotide sequence ID" value="NM_001320309.1"/>
</dbReference>
<dbReference type="RefSeq" id="NP_001307239.1">
    <property type="nucleotide sequence ID" value="NM_001320310.1"/>
</dbReference>
<dbReference type="RefSeq" id="NP_001307240.1">
    <property type="nucleotide sequence ID" value="NM_001320311.1"/>
</dbReference>
<dbReference type="RefSeq" id="NP_219484.1">
    <property type="nucleotide sequence ID" value="NM_033416.3"/>
</dbReference>
<dbReference type="PDB" id="7MQ8">
    <property type="method" value="EM"/>
    <property type="resolution" value="3.60 A"/>
    <property type="chains" value="SM=1-291"/>
</dbReference>
<dbReference type="PDB" id="7MQ9">
    <property type="method" value="EM"/>
    <property type="resolution" value="3.87 A"/>
    <property type="chains" value="SM=1-291"/>
</dbReference>
<dbReference type="PDB" id="7MQA">
    <property type="method" value="EM"/>
    <property type="resolution" value="2.70 A"/>
    <property type="chains" value="SM=1-291"/>
</dbReference>
<dbReference type="PDBsum" id="7MQ8"/>
<dbReference type="PDBsum" id="7MQ9"/>
<dbReference type="PDBsum" id="7MQA"/>
<dbReference type="EMDB" id="EMD-23936"/>
<dbReference type="EMDB" id="EMD-23937"/>
<dbReference type="EMDB" id="EMD-23938"/>
<dbReference type="SMR" id="Q96G21"/>
<dbReference type="BioGRID" id="124984">
    <property type="interactions" value="133"/>
</dbReference>
<dbReference type="ComplexPortal" id="CPX-2478">
    <property type="entry name" value="MPP10 complex"/>
</dbReference>
<dbReference type="CORUM" id="Q96G21"/>
<dbReference type="FunCoup" id="Q96G21">
    <property type="interactions" value="2261"/>
</dbReference>
<dbReference type="IntAct" id="Q96G21">
    <property type="interactions" value="79"/>
</dbReference>
<dbReference type="MINT" id="Q96G21"/>
<dbReference type="STRING" id="9606.ENSP00000259239"/>
<dbReference type="GlyGen" id="Q96G21">
    <property type="glycosylation" value="1 site, 1 O-linked glycan (1 site)"/>
</dbReference>
<dbReference type="iPTMnet" id="Q96G21"/>
<dbReference type="PhosphoSitePlus" id="Q96G21"/>
<dbReference type="SwissPalm" id="Q96G21"/>
<dbReference type="BioMuta" id="IMP4"/>
<dbReference type="DMDM" id="73621060"/>
<dbReference type="jPOST" id="Q96G21"/>
<dbReference type="MassIVE" id="Q96G21"/>
<dbReference type="PaxDb" id="9606-ENSP00000259239"/>
<dbReference type="PeptideAtlas" id="Q96G21"/>
<dbReference type="ProteomicsDB" id="76583"/>
<dbReference type="Pumba" id="Q96G21"/>
<dbReference type="Antibodypedia" id="47574">
    <property type="antibodies" value="120 antibodies from 21 providers"/>
</dbReference>
<dbReference type="DNASU" id="92856"/>
<dbReference type="Ensembl" id="ENST00000259239.8">
    <property type="protein sequence ID" value="ENSP00000259239.3"/>
    <property type="gene ID" value="ENSG00000136718.10"/>
</dbReference>
<dbReference type="GeneID" id="92856"/>
<dbReference type="KEGG" id="hsa:92856"/>
<dbReference type="MANE-Select" id="ENST00000259239.8">
    <property type="protein sequence ID" value="ENSP00000259239.3"/>
    <property type="RefSeq nucleotide sequence ID" value="NM_033416.3"/>
    <property type="RefSeq protein sequence ID" value="NP_219484.1"/>
</dbReference>
<dbReference type="UCSC" id="uc002tra.2">
    <property type="organism name" value="human"/>
</dbReference>
<dbReference type="AGR" id="HGNC:30856"/>
<dbReference type="CTD" id="92856"/>
<dbReference type="DisGeNET" id="92856"/>
<dbReference type="GeneCards" id="IMP4"/>
<dbReference type="HGNC" id="HGNC:30856">
    <property type="gene designation" value="IMP4"/>
</dbReference>
<dbReference type="HPA" id="ENSG00000136718">
    <property type="expression patterns" value="Low tissue specificity"/>
</dbReference>
<dbReference type="MIM" id="612981">
    <property type="type" value="gene"/>
</dbReference>
<dbReference type="neXtProt" id="NX_Q96G21"/>
<dbReference type="OpenTargets" id="ENSG00000136718"/>
<dbReference type="PharmGKB" id="PA142671656"/>
<dbReference type="VEuPathDB" id="HostDB:ENSG00000136718"/>
<dbReference type="eggNOG" id="KOG2781">
    <property type="taxonomic scope" value="Eukaryota"/>
</dbReference>
<dbReference type="GeneTree" id="ENSGT00940000153231"/>
<dbReference type="InParanoid" id="Q96G21"/>
<dbReference type="OMA" id="IGTMSEQ"/>
<dbReference type="OrthoDB" id="10253204at2759"/>
<dbReference type="PAN-GO" id="Q96G21">
    <property type="GO annotations" value="5 GO annotations based on evolutionary models"/>
</dbReference>
<dbReference type="PhylomeDB" id="Q96G21"/>
<dbReference type="TreeFam" id="TF300016"/>
<dbReference type="PathwayCommons" id="Q96G21"/>
<dbReference type="Reactome" id="R-HSA-6790901">
    <property type="pathway name" value="rRNA modification in the nucleus and cytosol"/>
</dbReference>
<dbReference type="Reactome" id="R-HSA-6791226">
    <property type="pathway name" value="Major pathway of rRNA processing in the nucleolus and cytosol"/>
</dbReference>
<dbReference type="SignaLink" id="Q96G21"/>
<dbReference type="SIGNOR" id="Q96G21"/>
<dbReference type="BioGRID-ORCS" id="92856">
    <property type="hits" value="768 hits in 1154 CRISPR screens"/>
</dbReference>
<dbReference type="CD-CODE" id="91857CE7">
    <property type="entry name" value="Nucleolus"/>
</dbReference>
<dbReference type="ChiTaRS" id="IMP4">
    <property type="organism name" value="human"/>
</dbReference>
<dbReference type="GeneWiki" id="IMP4"/>
<dbReference type="GenomeRNAi" id="92856"/>
<dbReference type="Pharos" id="Q96G21">
    <property type="development level" value="Tdark"/>
</dbReference>
<dbReference type="PRO" id="PR:Q96G21"/>
<dbReference type="Proteomes" id="UP000005640">
    <property type="component" value="Chromosome 2"/>
</dbReference>
<dbReference type="RNAct" id="Q96G21">
    <property type="molecule type" value="protein"/>
</dbReference>
<dbReference type="Bgee" id="ENSG00000136718">
    <property type="expression patterns" value="Expressed in body of pancreas and 200 other cell types or tissues"/>
</dbReference>
<dbReference type="ExpressionAtlas" id="Q96G21">
    <property type="expression patterns" value="baseline and differential"/>
</dbReference>
<dbReference type="GO" id="GO:0001650">
    <property type="term" value="C:fibrillar center"/>
    <property type="evidence" value="ECO:0000314"/>
    <property type="project" value="HPA"/>
</dbReference>
<dbReference type="GO" id="GO:0034457">
    <property type="term" value="C:Mpp10 complex"/>
    <property type="evidence" value="ECO:0000314"/>
    <property type="project" value="MGI"/>
</dbReference>
<dbReference type="GO" id="GO:0005730">
    <property type="term" value="C:nucleolus"/>
    <property type="evidence" value="ECO:0000314"/>
    <property type="project" value="HGNC-UCL"/>
</dbReference>
<dbReference type="GO" id="GO:0005654">
    <property type="term" value="C:nucleoplasm"/>
    <property type="evidence" value="ECO:0000304"/>
    <property type="project" value="Reactome"/>
</dbReference>
<dbReference type="GO" id="GO:0030684">
    <property type="term" value="C:preribosome"/>
    <property type="evidence" value="ECO:0000314"/>
    <property type="project" value="MGI"/>
</dbReference>
<dbReference type="GO" id="GO:0032040">
    <property type="term" value="C:small-subunit processome"/>
    <property type="evidence" value="ECO:0000314"/>
    <property type="project" value="UniProtKB"/>
</dbReference>
<dbReference type="GO" id="GO:0042134">
    <property type="term" value="F:rRNA primary transcript binding"/>
    <property type="evidence" value="ECO:0007669"/>
    <property type="project" value="InterPro"/>
</dbReference>
<dbReference type="GO" id="GO:0030515">
    <property type="term" value="F:snoRNA binding"/>
    <property type="evidence" value="ECO:0000318"/>
    <property type="project" value="GO_Central"/>
</dbReference>
<dbReference type="GO" id="GO:0030490">
    <property type="term" value="P:maturation of SSU-rRNA"/>
    <property type="evidence" value="ECO:0000303"/>
    <property type="project" value="ComplexPortal"/>
</dbReference>
<dbReference type="GO" id="GO:0042274">
    <property type="term" value="P:ribosomal small subunit biogenesis"/>
    <property type="evidence" value="ECO:0000314"/>
    <property type="project" value="UniProtKB"/>
</dbReference>
<dbReference type="GO" id="GO:0006364">
    <property type="term" value="P:rRNA processing"/>
    <property type="evidence" value="ECO:0000318"/>
    <property type="project" value="GO_Central"/>
</dbReference>
<dbReference type="FunFam" id="3.40.50.10480:FF:000001">
    <property type="entry name" value="IMP4, U3 small nucleolar ribonucleoprotein"/>
    <property type="match status" value="1"/>
</dbReference>
<dbReference type="Gene3D" id="3.40.50.10480">
    <property type="entry name" value="Probable brix-domain ribosomal biogenesis protein"/>
    <property type="match status" value="1"/>
</dbReference>
<dbReference type="InterPro" id="IPR007109">
    <property type="entry name" value="Brix"/>
</dbReference>
<dbReference type="InterPro" id="IPR044281">
    <property type="entry name" value="IMP4/RPF1"/>
</dbReference>
<dbReference type="PANTHER" id="PTHR22734">
    <property type="entry name" value="U3 SMALL NUCLEOLAR RIBONUCLEOPROTEIN PROTEIN IMP4"/>
    <property type="match status" value="1"/>
</dbReference>
<dbReference type="PANTHER" id="PTHR22734:SF2">
    <property type="entry name" value="U3 SMALL NUCLEOLAR RIBONUCLEOPROTEIN PROTEIN IMP4"/>
    <property type="match status" value="1"/>
</dbReference>
<dbReference type="Pfam" id="PF04427">
    <property type="entry name" value="Brix"/>
    <property type="match status" value="1"/>
</dbReference>
<dbReference type="SMART" id="SM00879">
    <property type="entry name" value="Brix"/>
    <property type="match status" value="1"/>
</dbReference>
<dbReference type="SUPFAM" id="SSF52954">
    <property type="entry name" value="Class II aaRS ABD-related"/>
    <property type="match status" value="1"/>
</dbReference>
<dbReference type="PROSITE" id="PS50833">
    <property type="entry name" value="BRIX"/>
    <property type="match status" value="1"/>
</dbReference>
<name>IMP4_HUMAN</name>
<feature type="chain" id="PRO_0000120236" description="U3 small nucleolar ribonucleoprotein protein IMP4">
    <location>
        <begin position="1"/>
        <end position="291"/>
    </location>
</feature>
<feature type="domain" description="Brix" evidence="1">
    <location>
        <begin position="83"/>
        <end position="264"/>
    </location>
</feature>
<gene>
    <name evidence="5" type="primary">IMP4</name>
    <name type="synonym">BXDC4</name>
</gene>
<comment type="function">
    <text evidence="2 4">Component of the 60-80S U3 small nucleolar ribonucleoprotein (U3 snoRNP). Required for the early cleavages during pre-18S ribosomal RNA processing (PubMed:12655004). Part of the small subunit (SSU) processome, first precursor of the small eukaryotic ribosomal subunit. During the assembly of the SSU processome in the nucleolus, many ribosome biogenesis factors, an RNA chaperone and ribosomal proteins associate with the nascent pre-rRNA and work in concert to generate RNA folding, modifications, rearrangements and cleavage as well as targeted degradation of pre-ribosomal RNA by the RNA exosome (PubMed:34516797).</text>
</comment>
<comment type="subunit">
    <text evidence="2 4">Part of the small subunit (SSU) processome, composed of more than 70 proteins and the RNA chaperone small nucleolar RNA (snoRNA) U3 (PubMed:34516797). Component of a heterotrimeric complex containing IMP3, IMP4 and MPHOSPH10. Interacts with MPHOSPH10 (PubMed:12655004).</text>
</comment>
<comment type="interaction">
    <interactant intactId="EBI-8641721">
        <id>Q96G21</id>
    </interactant>
    <interactant intactId="EBI-5235884">
        <id>O00566</id>
        <label>MPHOSPH10</label>
    </interactant>
    <organismsDiffer>false</organismsDiffer>
    <experiments>3</experiments>
</comment>
<comment type="interaction">
    <interactant intactId="EBI-8641721">
        <id>Q96G21</id>
    </interactant>
    <interactant intactId="EBI-740434">
        <id>O15156</id>
        <label>ZBTB7B</label>
    </interactant>
    <organismsDiffer>false</organismsDiffer>
    <experiments>4</experiments>
</comment>
<comment type="interaction">
    <interactant intactId="EBI-8641721">
        <id>Q96G21</id>
    </interactant>
    <interactant intactId="EBI-11522250">
        <id>O15156-2</id>
        <label>ZBTB7B</label>
    </interactant>
    <organismsDiffer>false</organismsDiffer>
    <experiments>3</experiments>
</comment>
<comment type="subcellular location">
    <subcellularLocation>
        <location evidence="2 3 4">Nucleus</location>
        <location evidence="2 3 4">Nucleolus</location>
    </subcellularLocation>
</comment>
<protein>
    <recommendedName>
        <fullName>U3 small nucleolar ribonucleoprotein protein IMP4</fullName>
        <shortName>U3 snoRNP protein IMP4</shortName>
    </recommendedName>
    <alternativeName>
        <fullName>Brix domain-containing protein 4</fullName>
    </alternativeName>
</protein>
<proteinExistence type="evidence at protein level"/>
<accession>Q96G21</accession>
<accession>Q3ZTT3</accession>
<evidence type="ECO:0000255" key="1">
    <source>
        <dbReference type="PROSITE-ProRule" id="PRU00034"/>
    </source>
</evidence>
<evidence type="ECO:0000269" key="2">
    <source>
    </source>
</evidence>
<evidence type="ECO:0000269" key="3">
    <source>
    </source>
</evidence>
<evidence type="ECO:0000269" key="4">
    <source>
    </source>
</evidence>
<evidence type="ECO:0000312" key="5">
    <source>
        <dbReference type="HGNC" id="HGNC:30856"/>
    </source>
</evidence>
<evidence type="ECO:0007744" key="6">
    <source>
        <dbReference type="PDB" id="7MQ8"/>
    </source>
</evidence>
<evidence type="ECO:0007744" key="7">
    <source>
        <dbReference type="PDB" id="7MQ9"/>
    </source>
</evidence>
<evidence type="ECO:0007744" key="8">
    <source>
        <dbReference type="PDB" id="7MQA"/>
    </source>
</evidence>
<reference key="1">
    <citation type="journal article" date="2006" name="BMC Genomics">
        <title>NovelFam3000 -- uncharacterized human protein domains conserved across model organisms.</title>
        <authorList>
            <person name="Kemmer D."/>
            <person name="Podowski R.M."/>
            <person name="Arenillas D."/>
            <person name="Lim J."/>
            <person name="Hodges E."/>
            <person name="Roth P."/>
            <person name="Sonnhammer E.L.L."/>
            <person name="Hoeoeg C."/>
            <person name="Wasserman W.W."/>
        </authorList>
    </citation>
    <scope>NUCLEOTIDE SEQUENCE [MRNA]</scope>
    <scope>SUBCELLULAR LOCATION</scope>
</reference>
<reference key="2">
    <citation type="journal article" date="2004" name="Nat. Genet.">
        <title>Complete sequencing and characterization of 21,243 full-length human cDNAs.</title>
        <authorList>
            <person name="Ota T."/>
            <person name="Suzuki Y."/>
            <person name="Nishikawa T."/>
            <person name="Otsuki T."/>
            <person name="Sugiyama T."/>
            <person name="Irie R."/>
            <person name="Wakamatsu A."/>
            <person name="Hayashi K."/>
            <person name="Sato H."/>
            <person name="Nagai K."/>
            <person name="Kimura K."/>
            <person name="Makita H."/>
            <person name="Sekine M."/>
            <person name="Obayashi M."/>
            <person name="Nishi T."/>
            <person name="Shibahara T."/>
            <person name="Tanaka T."/>
            <person name="Ishii S."/>
            <person name="Yamamoto J."/>
            <person name="Saito K."/>
            <person name="Kawai Y."/>
            <person name="Isono Y."/>
            <person name="Nakamura Y."/>
            <person name="Nagahari K."/>
            <person name="Murakami K."/>
            <person name="Yasuda T."/>
            <person name="Iwayanagi T."/>
            <person name="Wagatsuma M."/>
            <person name="Shiratori A."/>
            <person name="Sudo H."/>
            <person name="Hosoiri T."/>
            <person name="Kaku Y."/>
            <person name="Kodaira H."/>
            <person name="Kondo H."/>
            <person name="Sugawara M."/>
            <person name="Takahashi M."/>
            <person name="Kanda K."/>
            <person name="Yokoi T."/>
            <person name="Furuya T."/>
            <person name="Kikkawa E."/>
            <person name="Omura Y."/>
            <person name="Abe K."/>
            <person name="Kamihara K."/>
            <person name="Katsuta N."/>
            <person name="Sato K."/>
            <person name="Tanikawa M."/>
            <person name="Yamazaki M."/>
            <person name="Ninomiya K."/>
            <person name="Ishibashi T."/>
            <person name="Yamashita H."/>
            <person name="Murakawa K."/>
            <person name="Fujimori K."/>
            <person name="Tanai H."/>
            <person name="Kimata M."/>
            <person name="Watanabe M."/>
            <person name="Hiraoka S."/>
            <person name="Chiba Y."/>
            <person name="Ishida S."/>
            <person name="Ono Y."/>
            <person name="Takiguchi S."/>
            <person name="Watanabe S."/>
            <person name="Yosida M."/>
            <person name="Hotuta T."/>
            <person name="Kusano J."/>
            <person name="Kanehori K."/>
            <person name="Takahashi-Fujii A."/>
            <person name="Hara H."/>
            <person name="Tanase T.-O."/>
            <person name="Nomura Y."/>
            <person name="Togiya S."/>
            <person name="Komai F."/>
            <person name="Hara R."/>
            <person name="Takeuchi K."/>
            <person name="Arita M."/>
            <person name="Imose N."/>
            <person name="Musashino K."/>
            <person name="Yuuki H."/>
            <person name="Oshima A."/>
            <person name="Sasaki N."/>
            <person name="Aotsuka S."/>
            <person name="Yoshikawa Y."/>
            <person name="Matsunawa H."/>
            <person name="Ichihara T."/>
            <person name="Shiohata N."/>
            <person name="Sano S."/>
            <person name="Moriya S."/>
            <person name="Momiyama H."/>
            <person name="Satoh N."/>
            <person name="Takami S."/>
            <person name="Terashima Y."/>
            <person name="Suzuki O."/>
            <person name="Nakagawa S."/>
            <person name="Senoh A."/>
            <person name="Mizoguchi H."/>
            <person name="Goto Y."/>
            <person name="Shimizu F."/>
            <person name="Wakebe H."/>
            <person name="Hishigaki H."/>
            <person name="Watanabe T."/>
            <person name="Sugiyama A."/>
            <person name="Takemoto M."/>
            <person name="Kawakami B."/>
            <person name="Yamazaki M."/>
            <person name="Watanabe K."/>
            <person name="Kumagai A."/>
            <person name="Itakura S."/>
            <person name="Fukuzumi Y."/>
            <person name="Fujimori Y."/>
            <person name="Komiyama M."/>
            <person name="Tashiro H."/>
            <person name="Tanigami A."/>
            <person name="Fujiwara T."/>
            <person name="Ono T."/>
            <person name="Yamada K."/>
            <person name="Fujii Y."/>
            <person name="Ozaki K."/>
            <person name="Hirao M."/>
            <person name="Ohmori Y."/>
            <person name="Kawabata A."/>
            <person name="Hikiji T."/>
            <person name="Kobatake N."/>
            <person name="Inagaki H."/>
            <person name="Ikema Y."/>
            <person name="Okamoto S."/>
            <person name="Okitani R."/>
            <person name="Kawakami T."/>
            <person name="Noguchi S."/>
            <person name="Itoh T."/>
            <person name="Shigeta K."/>
            <person name="Senba T."/>
            <person name="Matsumura K."/>
            <person name="Nakajima Y."/>
            <person name="Mizuno T."/>
            <person name="Morinaga M."/>
            <person name="Sasaki M."/>
            <person name="Togashi T."/>
            <person name="Oyama M."/>
            <person name="Hata H."/>
            <person name="Watanabe M."/>
            <person name="Komatsu T."/>
            <person name="Mizushima-Sugano J."/>
            <person name="Satoh T."/>
            <person name="Shirai Y."/>
            <person name="Takahashi Y."/>
            <person name="Nakagawa K."/>
            <person name="Okumura K."/>
            <person name="Nagase T."/>
            <person name="Nomura N."/>
            <person name="Kikuchi H."/>
            <person name="Masuho Y."/>
            <person name="Yamashita R."/>
            <person name="Nakai K."/>
            <person name="Yada T."/>
            <person name="Nakamura Y."/>
            <person name="Ohara O."/>
            <person name="Isogai T."/>
            <person name="Sugano S."/>
        </authorList>
    </citation>
    <scope>NUCLEOTIDE SEQUENCE [LARGE SCALE MRNA]</scope>
    <source>
        <tissue>Caudate nucleus</tissue>
        <tissue>Testis</tissue>
    </source>
</reference>
<reference key="3">
    <citation type="journal article" date="2005" name="Nature">
        <title>Generation and annotation of the DNA sequences of human chromosomes 2 and 4.</title>
        <authorList>
            <person name="Hillier L.W."/>
            <person name="Graves T.A."/>
            <person name="Fulton R.S."/>
            <person name="Fulton L.A."/>
            <person name="Pepin K.H."/>
            <person name="Minx P."/>
            <person name="Wagner-McPherson C."/>
            <person name="Layman D."/>
            <person name="Wylie K."/>
            <person name="Sekhon M."/>
            <person name="Becker M.C."/>
            <person name="Fewell G.A."/>
            <person name="Delehaunty K.D."/>
            <person name="Miner T.L."/>
            <person name="Nash W.E."/>
            <person name="Kremitzki C."/>
            <person name="Oddy L."/>
            <person name="Du H."/>
            <person name="Sun H."/>
            <person name="Bradshaw-Cordum H."/>
            <person name="Ali J."/>
            <person name="Carter J."/>
            <person name="Cordes M."/>
            <person name="Harris A."/>
            <person name="Isak A."/>
            <person name="van Brunt A."/>
            <person name="Nguyen C."/>
            <person name="Du F."/>
            <person name="Courtney L."/>
            <person name="Kalicki J."/>
            <person name="Ozersky P."/>
            <person name="Abbott S."/>
            <person name="Armstrong J."/>
            <person name="Belter E.A."/>
            <person name="Caruso L."/>
            <person name="Cedroni M."/>
            <person name="Cotton M."/>
            <person name="Davidson T."/>
            <person name="Desai A."/>
            <person name="Elliott G."/>
            <person name="Erb T."/>
            <person name="Fronick C."/>
            <person name="Gaige T."/>
            <person name="Haakenson W."/>
            <person name="Haglund K."/>
            <person name="Holmes A."/>
            <person name="Harkins R."/>
            <person name="Kim K."/>
            <person name="Kruchowski S.S."/>
            <person name="Strong C.M."/>
            <person name="Grewal N."/>
            <person name="Goyea E."/>
            <person name="Hou S."/>
            <person name="Levy A."/>
            <person name="Martinka S."/>
            <person name="Mead K."/>
            <person name="McLellan M.D."/>
            <person name="Meyer R."/>
            <person name="Randall-Maher J."/>
            <person name="Tomlinson C."/>
            <person name="Dauphin-Kohlberg S."/>
            <person name="Kozlowicz-Reilly A."/>
            <person name="Shah N."/>
            <person name="Swearengen-Shahid S."/>
            <person name="Snider J."/>
            <person name="Strong J.T."/>
            <person name="Thompson J."/>
            <person name="Yoakum M."/>
            <person name="Leonard S."/>
            <person name="Pearman C."/>
            <person name="Trani L."/>
            <person name="Radionenko M."/>
            <person name="Waligorski J.E."/>
            <person name="Wang C."/>
            <person name="Rock S.M."/>
            <person name="Tin-Wollam A.-M."/>
            <person name="Maupin R."/>
            <person name="Latreille P."/>
            <person name="Wendl M.C."/>
            <person name="Yang S.-P."/>
            <person name="Pohl C."/>
            <person name="Wallis J.W."/>
            <person name="Spieth J."/>
            <person name="Bieri T.A."/>
            <person name="Berkowicz N."/>
            <person name="Nelson J.O."/>
            <person name="Osborne J."/>
            <person name="Ding L."/>
            <person name="Meyer R."/>
            <person name="Sabo A."/>
            <person name="Shotland Y."/>
            <person name="Sinha P."/>
            <person name="Wohldmann P.E."/>
            <person name="Cook L.L."/>
            <person name="Hickenbotham M.T."/>
            <person name="Eldred J."/>
            <person name="Williams D."/>
            <person name="Jones T.A."/>
            <person name="She X."/>
            <person name="Ciccarelli F.D."/>
            <person name="Izaurralde E."/>
            <person name="Taylor J."/>
            <person name="Schmutz J."/>
            <person name="Myers R.M."/>
            <person name="Cox D.R."/>
            <person name="Huang X."/>
            <person name="McPherson J.D."/>
            <person name="Mardis E.R."/>
            <person name="Clifton S.W."/>
            <person name="Warren W.C."/>
            <person name="Chinwalla A.T."/>
            <person name="Eddy S.R."/>
            <person name="Marra M.A."/>
            <person name="Ovcharenko I."/>
            <person name="Furey T.S."/>
            <person name="Miller W."/>
            <person name="Eichler E.E."/>
            <person name="Bork P."/>
            <person name="Suyama M."/>
            <person name="Torrents D."/>
            <person name="Waterston R.H."/>
            <person name="Wilson R.K."/>
        </authorList>
    </citation>
    <scope>NUCLEOTIDE SEQUENCE [LARGE SCALE GENOMIC DNA]</scope>
</reference>
<reference key="4">
    <citation type="journal article" date="2004" name="Genome Res.">
        <title>The status, quality, and expansion of the NIH full-length cDNA project: the Mammalian Gene Collection (MGC).</title>
        <authorList>
            <consortium name="The MGC Project Team"/>
        </authorList>
    </citation>
    <scope>NUCLEOTIDE SEQUENCE [LARGE SCALE MRNA]</scope>
    <source>
        <tissue>Placenta</tissue>
    </source>
</reference>
<reference key="5">
    <citation type="journal article" date="2003" name="Nucleic Acids Res.">
        <title>The human Imp3 and Imp4 proteins form a ternary complex with hMpp10, which only interacts with the U3 snoRNA in 60-80S ribonucleoprotein complexes.</title>
        <authorList>
            <person name="Granneman S."/>
            <person name="Gallagher J.E.G."/>
            <person name="Vogelzangs J."/>
            <person name="Horstman W."/>
            <person name="van Venrooij W.J."/>
            <person name="Baserga S.J."/>
            <person name="Pruijn G.J.M."/>
        </authorList>
    </citation>
    <scope>FUNCTION</scope>
    <scope>SUBCELLULAR LOCATION</scope>
    <scope>INTERACTION WITH MPHOSPH10</scope>
</reference>
<reference evidence="6 7 8" key="6">
    <citation type="journal article" date="2021" name="Science">
        <title>Nucleolar maturation of the human small subunit processome.</title>
        <authorList>
            <person name="Singh S."/>
            <person name="Vanden Broeck A."/>
            <person name="Miller L."/>
            <person name="Chaker-Margot M."/>
            <person name="Klinge S."/>
        </authorList>
    </citation>
    <scope>STRUCTURE BY ELECTRON MICROSCOPY (2.70 ANGSTROMS)</scope>
    <scope>FUNCTION</scope>
    <scope>SUBUNIT</scope>
    <scope>SUBCELLULAR LOCATION</scope>
</reference>
<keyword id="KW-0002">3D-structure</keyword>
<keyword id="KW-0539">Nucleus</keyword>
<keyword id="KW-1267">Proteomics identification</keyword>
<keyword id="KW-1185">Reference proteome</keyword>
<keyword id="KW-0687">Ribonucleoprotein</keyword>
<keyword id="KW-0690">Ribosome biogenesis</keyword>
<keyword id="KW-0698">rRNA processing</keyword>
<organism>
    <name type="scientific">Homo sapiens</name>
    <name type="common">Human</name>
    <dbReference type="NCBI Taxonomy" id="9606"/>
    <lineage>
        <taxon>Eukaryota</taxon>
        <taxon>Metazoa</taxon>
        <taxon>Chordata</taxon>
        <taxon>Craniata</taxon>
        <taxon>Vertebrata</taxon>
        <taxon>Euteleostomi</taxon>
        <taxon>Mammalia</taxon>
        <taxon>Eutheria</taxon>
        <taxon>Euarchontoglires</taxon>
        <taxon>Primates</taxon>
        <taxon>Haplorrhini</taxon>
        <taxon>Catarrhini</taxon>
        <taxon>Hominidae</taxon>
        <taxon>Homo</taxon>
    </lineage>
</organism>